<evidence type="ECO:0000255" key="1">
    <source>
        <dbReference type="HAMAP-Rule" id="MF_01329"/>
    </source>
</evidence>
<evidence type="ECO:0000305" key="2"/>
<comment type="function">
    <text evidence="1">A core subunit of photosystem II (PSII), probably helps stabilize the reaction center.</text>
</comment>
<comment type="subunit">
    <text evidence="1">PSII is composed of 1 copy each of membrane proteins PsbA, PsbB, PsbC, PsbD, PsbE, PsbF, PsbH, PsbI, PsbJ, PsbK, PsbL, PsbM, PsbT, PsbX, PsbY, PsbZ, Psb30/Ycf12, peripheral proteins PsbO, CyanoQ (PsbQ), PsbU, PsbV and a large number of cofactors. It forms dimeric complexes.</text>
</comment>
<comment type="subcellular location">
    <subcellularLocation>
        <location evidence="1">Cellular thylakoid membrane</location>
        <topology evidence="1">Single-pass membrane protein</topology>
    </subcellularLocation>
</comment>
<comment type="similarity">
    <text evidence="1">Belongs to the Psb30/Ycf12 family.</text>
</comment>
<comment type="sequence caution" evidence="2">
    <conflict type="erroneous initiation">
        <sequence resource="EMBL-CDS" id="ACB51155"/>
    </conflict>
    <text>Extended N-terminus.</text>
</comment>
<name>PSB30_CROS5</name>
<organism>
    <name type="scientific">Crocosphaera subtropica (strain ATCC 51142 / BH68)</name>
    <name type="common">Cyanothece sp. (strain ATCC 51142)</name>
    <dbReference type="NCBI Taxonomy" id="43989"/>
    <lineage>
        <taxon>Bacteria</taxon>
        <taxon>Bacillati</taxon>
        <taxon>Cyanobacteriota</taxon>
        <taxon>Cyanophyceae</taxon>
        <taxon>Oscillatoriophycideae</taxon>
        <taxon>Chroococcales</taxon>
        <taxon>Aphanothecaceae</taxon>
        <taxon>Crocosphaera</taxon>
        <taxon>Crocosphaera subtropica</taxon>
    </lineage>
</organism>
<dbReference type="EMBL" id="CP000806">
    <property type="protein sequence ID" value="ACB51155.1"/>
    <property type="status" value="ALT_INIT"/>
    <property type="molecule type" value="Genomic_DNA"/>
</dbReference>
<dbReference type="RefSeq" id="WP_008273783.1">
    <property type="nucleotide sequence ID" value="NC_010546.1"/>
</dbReference>
<dbReference type="SMR" id="B1WZK3"/>
<dbReference type="STRING" id="43989.cce_1805"/>
<dbReference type="KEGG" id="cyt:cce_1805"/>
<dbReference type="eggNOG" id="ENOG5032GTP">
    <property type="taxonomic scope" value="Bacteria"/>
</dbReference>
<dbReference type="HOGENOM" id="CLU_196761_1_0_3"/>
<dbReference type="OrthoDB" id="516821at2"/>
<dbReference type="Proteomes" id="UP000001203">
    <property type="component" value="Chromosome circular"/>
</dbReference>
<dbReference type="GO" id="GO:0009523">
    <property type="term" value="C:photosystem II"/>
    <property type="evidence" value="ECO:0007669"/>
    <property type="project" value="UniProtKB-KW"/>
</dbReference>
<dbReference type="GO" id="GO:0031676">
    <property type="term" value="C:plasma membrane-derived thylakoid membrane"/>
    <property type="evidence" value="ECO:0007669"/>
    <property type="project" value="UniProtKB-SubCell"/>
</dbReference>
<dbReference type="GO" id="GO:0015979">
    <property type="term" value="P:photosynthesis"/>
    <property type="evidence" value="ECO:0007669"/>
    <property type="project" value="UniProtKB-KW"/>
</dbReference>
<dbReference type="HAMAP" id="MF_01329">
    <property type="entry name" value="PSII_Psb30_Ycf12"/>
    <property type="match status" value="1"/>
</dbReference>
<dbReference type="InterPro" id="IPR010284">
    <property type="entry name" value="PSII_Ycf12_core-subunit"/>
</dbReference>
<dbReference type="NCBIfam" id="NF010239">
    <property type="entry name" value="PRK13686.1"/>
    <property type="match status" value="1"/>
</dbReference>
<dbReference type="Pfam" id="PF05969">
    <property type="entry name" value="PSII_Ycf12"/>
    <property type="match status" value="1"/>
</dbReference>
<reference key="1">
    <citation type="journal article" date="2008" name="Proc. Natl. Acad. Sci. U.S.A.">
        <title>The genome of Cyanothece 51142, a unicellular diazotrophic cyanobacterium important in the marine nitrogen cycle.</title>
        <authorList>
            <person name="Welsh E.A."/>
            <person name="Liberton M."/>
            <person name="Stoeckel J."/>
            <person name="Loh T."/>
            <person name="Elvitigala T."/>
            <person name="Wang C."/>
            <person name="Wollam A."/>
            <person name="Fulton R.S."/>
            <person name="Clifton S.W."/>
            <person name="Jacobs J.M."/>
            <person name="Aurora R."/>
            <person name="Ghosh B.K."/>
            <person name="Sherman L.A."/>
            <person name="Smith R.D."/>
            <person name="Wilson R.K."/>
            <person name="Pakrasi H.B."/>
        </authorList>
    </citation>
    <scope>NUCLEOTIDE SEQUENCE [LARGE SCALE GENOMIC DNA]</scope>
    <source>
        <strain>ATCC 51142 / BH68</strain>
    </source>
</reference>
<accession>B1WZK3</accession>
<proteinExistence type="inferred from homology"/>
<protein>
    <recommendedName>
        <fullName evidence="1">Photosystem II reaction center protein Psb30</fullName>
    </recommendedName>
    <alternativeName>
        <fullName evidence="1">Photosystem II reaction center protein Ycf12</fullName>
    </alternativeName>
</protein>
<sequence>MELLAALNLEPIFQLTFVGLIVIAGPIVIAVLAFRGGDL</sequence>
<feature type="chain" id="PRO_0000365270" description="Photosystem II reaction center protein Psb30">
    <location>
        <begin position="1"/>
        <end position="39"/>
    </location>
</feature>
<feature type="transmembrane region" description="Helical" evidence="1">
    <location>
        <begin position="12"/>
        <end position="32"/>
    </location>
</feature>
<keyword id="KW-0472">Membrane</keyword>
<keyword id="KW-0602">Photosynthesis</keyword>
<keyword id="KW-0604">Photosystem II</keyword>
<keyword id="KW-1185">Reference proteome</keyword>
<keyword id="KW-0793">Thylakoid</keyword>
<keyword id="KW-0812">Transmembrane</keyword>
<keyword id="KW-1133">Transmembrane helix</keyword>
<gene>
    <name evidence="1" type="primary">psb30</name>
    <name evidence="1" type="synonym">ycf12</name>
    <name type="ordered locus">cce_1805</name>
</gene>